<reference key="1">
    <citation type="journal article" date="2002" name="Mol. Microbiol.">
        <title>Genome sequence of Streptococcus agalactiae, a pathogen causing invasive neonatal disease.</title>
        <authorList>
            <person name="Glaser P."/>
            <person name="Rusniok C."/>
            <person name="Buchrieser C."/>
            <person name="Chevalier F."/>
            <person name="Frangeul L."/>
            <person name="Msadek T."/>
            <person name="Zouine M."/>
            <person name="Couve E."/>
            <person name="Lalioui L."/>
            <person name="Poyart C."/>
            <person name="Trieu-Cuot P."/>
            <person name="Kunst F."/>
        </authorList>
    </citation>
    <scope>NUCLEOTIDE SEQUENCE [LARGE SCALE GENOMIC DNA]</scope>
    <source>
        <strain>NEM316</strain>
    </source>
</reference>
<keyword id="KW-0028">Amino-acid biosynthesis</keyword>
<keyword id="KW-0061">Asparagine biosynthesis</keyword>
<keyword id="KW-0067">ATP-binding</keyword>
<keyword id="KW-0963">Cytoplasm</keyword>
<keyword id="KW-0436">Ligase</keyword>
<keyword id="KW-0547">Nucleotide-binding</keyword>
<name>ASNA_STRA3</name>
<evidence type="ECO:0000255" key="1">
    <source>
        <dbReference type="HAMAP-Rule" id="MF_00555"/>
    </source>
</evidence>
<feature type="chain" id="PRO_0000195889" description="Aspartate--ammonia ligase">
    <location>
        <begin position="1"/>
        <end position="330"/>
    </location>
</feature>
<organism>
    <name type="scientific">Streptococcus agalactiae serotype III (strain NEM316)</name>
    <dbReference type="NCBI Taxonomy" id="211110"/>
    <lineage>
        <taxon>Bacteria</taxon>
        <taxon>Bacillati</taxon>
        <taxon>Bacillota</taxon>
        <taxon>Bacilli</taxon>
        <taxon>Lactobacillales</taxon>
        <taxon>Streptococcaceae</taxon>
        <taxon>Streptococcus</taxon>
    </lineage>
</organism>
<comment type="catalytic activity">
    <reaction evidence="1">
        <text>L-aspartate + NH4(+) + ATP = L-asparagine + AMP + diphosphate + H(+)</text>
        <dbReference type="Rhea" id="RHEA:11372"/>
        <dbReference type="ChEBI" id="CHEBI:15378"/>
        <dbReference type="ChEBI" id="CHEBI:28938"/>
        <dbReference type="ChEBI" id="CHEBI:29991"/>
        <dbReference type="ChEBI" id="CHEBI:30616"/>
        <dbReference type="ChEBI" id="CHEBI:33019"/>
        <dbReference type="ChEBI" id="CHEBI:58048"/>
        <dbReference type="ChEBI" id="CHEBI:456215"/>
        <dbReference type="EC" id="6.3.1.1"/>
    </reaction>
</comment>
<comment type="pathway">
    <text evidence="1">Amino-acid biosynthesis; L-asparagine biosynthesis; L-asparagine from L-aspartate (ammonia route): step 1/1.</text>
</comment>
<comment type="subcellular location">
    <subcellularLocation>
        <location evidence="1">Cytoplasm</location>
    </subcellularLocation>
</comment>
<comment type="similarity">
    <text evidence="1">Belongs to the class-II aminoacyl-tRNA synthetase family. AsnA subfamily.</text>
</comment>
<gene>
    <name evidence="1" type="primary">asnA</name>
    <name type="ordered locus">gbs0497</name>
</gene>
<proteinExistence type="inferred from homology"/>
<accession>Q8E6R5</accession>
<sequence length="330" mass="37660">MKKSFIHQQQEISFVKNTFTQYLIDKLEIVEVQGPILSQVGDGMQDNLSGIEHPVSVKVLNIPEAEFEVVHSLAKWKRHTLARFGFNEGEGLFVHMKALRPDEDSLDPTHSVYVDQWDWEKVIPDGRRNLDYLKETVEKIYKAIRLTELAVEARFDIESILPKRITFIHTEELVEKYPDLSPKERENAIAKEYGAVFLIGIGGELADGKPHDGRAPDYDDWTTPSENGFKGLNGDILVWNEQLGTAFELSSMGIRVDEDALKRQVVLTGDEGRLEFEWHKTLLRGFFPLTIGGGIGQSRLAMFLLRKKHIGEVQSSVWPKEVRDTFENIL</sequence>
<dbReference type="EC" id="6.3.1.1" evidence="1"/>
<dbReference type="EMBL" id="AL766845">
    <property type="protein sequence ID" value="CAD46141.1"/>
    <property type="molecule type" value="Genomic_DNA"/>
</dbReference>
<dbReference type="RefSeq" id="WP_000748015.1">
    <property type="nucleotide sequence ID" value="NC_004368.1"/>
</dbReference>
<dbReference type="SMR" id="Q8E6R5"/>
<dbReference type="KEGG" id="san:gbs0497"/>
<dbReference type="eggNOG" id="COG2502">
    <property type="taxonomic scope" value="Bacteria"/>
</dbReference>
<dbReference type="HOGENOM" id="CLU_071543_0_0_9"/>
<dbReference type="UniPathway" id="UPA00134">
    <property type="reaction ID" value="UER00194"/>
</dbReference>
<dbReference type="Proteomes" id="UP000000823">
    <property type="component" value="Chromosome"/>
</dbReference>
<dbReference type="GO" id="GO:0005829">
    <property type="term" value="C:cytosol"/>
    <property type="evidence" value="ECO:0007669"/>
    <property type="project" value="TreeGrafter"/>
</dbReference>
<dbReference type="GO" id="GO:0004071">
    <property type="term" value="F:aspartate-ammonia ligase activity"/>
    <property type="evidence" value="ECO:0007669"/>
    <property type="project" value="UniProtKB-UniRule"/>
</dbReference>
<dbReference type="GO" id="GO:0005524">
    <property type="term" value="F:ATP binding"/>
    <property type="evidence" value="ECO:0007669"/>
    <property type="project" value="UniProtKB-UniRule"/>
</dbReference>
<dbReference type="GO" id="GO:0140096">
    <property type="term" value="F:catalytic activity, acting on a protein"/>
    <property type="evidence" value="ECO:0007669"/>
    <property type="project" value="UniProtKB-ARBA"/>
</dbReference>
<dbReference type="GO" id="GO:0016740">
    <property type="term" value="F:transferase activity"/>
    <property type="evidence" value="ECO:0007669"/>
    <property type="project" value="UniProtKB-ARBA"/>
</dbReference>
<dbReference type="GO" id="GO:0070981">
    <property type="term" value="P:L-asparagine biosynthetic process"/>
    <property type="evidence" value="ECO:0007669"/>
    <property type="project" value="UniProtKB-UniRule"/>
</dbReference>
<dbReference type="CDD" id="cd00645">
    <property type="entry name" value="AsnA"/>
    <property type="match status" value="1"/>
</dbReference>
<dbReference type="Gene3D" id="3.30.930.10">
    <property type="entry name" value="Bira Bifunctional Protein, Domain 2"/>
    <property type="match status" value="1"/>
</dbReference>
<dbReference type="HAMAP" id="MF_00555">
    <property type="entry name" value="AsnA"/>
    <property type="match status" value="1"/>
</dbReference>
<dbReference type="InterPro" id="IPR006195">
    <property type="entry name" value="aa-tRNA-synth_II"/>
</dbReference>
<dbReference type="InterPro" id="IPR045864">
    <property type="entry name" value="aa-tRNA-synth_II/BPL/LPL"/>
</dbReference>
<dbReference type="InterPro" id="IPR004618">
    <property type="entry name" value="AsnA"/>
</dbReference>
<dbReference type="NCBIfam" id="TIGR00669">
    <property type="entry name" value="asnA"/>
    <property type="match status" value="1"/>
</dbReference>
<dbReference type="PANTHER" id="PTHR30073">
    <property type="entry name" value="ASPARTATE--AMMONIA LIGASE"/>
    <property type="match status" value="1"/>
</dbReference>
<dbReference type="PANTHER" id="PTHR30073:SF5">
    <property type="entry name" value="ASPARTATE--AMMONIA LIGASE"/>
    <property type="match status" value="1"/>
</dbReference>
<dbReference type="Pfam" id="PF03590">
    <property type="entry name" value="AsnA"/>
    <property type="match status" value="1"/>
</dbReference>
<dbReference type="PIRSF" id="PIRSF001555">
    <property type="entry name" value="Asp_ammon_ligase"/>
    <property type="match status" value="1"/>
</dbReference>
<dbReference type="SUPFAM" id="SSF55681">
    <property type="entry name" value="Class II aaRS and biotin synthetases"/>
    <property type="match status" value="1"/>
</dbReference>
<dbReference type="PROSITE" id="PS50862">
    <property type="entry name" value="AA_TRNA_LIGASE_II"/>
    <property type="match status" value="1"/>
</dbReference>
<protein>
    <recommendedName>
        <fullName evidence="1">Aspartate--ammonia ligase</fullName>
        <ecNumber evidence="1">6.3.1.1</ecNumber>
    </recommendedName>
    <alternativeName>
        <fullName evidence="1">Asparagine synthetase A</fullName>
    </alternativeName>
</protein>